<evidence type="ECO:0000255" key="1">
    <source>
        <dbReference type="HAMAP-Rule" id="MF_00026"/>
    </source>
</evidence>
<evidence type="ECO:0000256" key="2">
    <source>
        <dbReference type="SAM" id="MobiDB-lite"/>
    </source>
</evidence>
<sequence length="118" mass="13592">MSDLDEIRRKRMAELEARQAAAQGQMQQQAQQQMQQQEAQRQFEEQKKALIAQILTTEARSRLANLKLTKPELVNQIEIQLIQSAQAGSLRGKVTDEQLKVLLRQIAGQKREIKITRK</sequence>
<protein>
    <recommendedName>
        <fullName evidence="1">DNA-binding protein Msm_0708</fullName>
    </recommendedName>
</protein>
<feature type="chain" id="PRO_1000002201" description="DNA-binding protein Msm_0708">
    <location>
        <begin position="1"/>
        <end position="118"/>
    </location>
</feature>
<feature type="region of interest" description="Disordered" evidence="2">
    <location>
        <begin position="16"/>
        <end position="39"/>
    </location>
</feature>
<feature type="compositionally biased region" description="Low complexity" evidence="2">
    <location>
        <begin position="18"/>
        <end position="39"/>
    </location>
</feature>
<gene>
    <name type="ordered locus">Msm_0708</name>
</gene>
<keyword id="KW-0238">DNA-binding</keyword>
<reference key="1">
    <citation type="journal article" date="2007" name="Proc. Natl. Acad. Sci. U.S.A.">
        <title>Genomic and metabolic adaptations of Methanobrevibacter smithii to the human gut.</title>
        <authorList>
            <person name="Samuel B.S."/>
            <person name="Hansen E.E."/>
            <person name="Manchester J.K."/>
            <person name="Coutinho P.M."/>
            <person name="Henrissat B."/>
            <person name="Fulton R."/>
            <person name="Latreille P."/>
            <person name="Kim K."/>
            <person name="Wilson R.K."/>
            <person name="Gordon J.I."/>
        </authorList>
    </citation>
    <scope>NUCLEOTIDE SEQUENCE [LARGE SCALE GENOMIC DNA]</scope>
    <source>
        <strain>ATCC 35061 / DSM 861 / OCM 144 / PS</strain>
    </source>
</reference>
<dbReference type="EMBL" id="CP000678">
    <property type="protein sequence ID" value="ABQ86913.1"/>
    <property type="molecule type" value="Genomic_DNA"/>
</dbReference>
<dbReference type="RefSeq" id="WP_004032465.1">
    <property type="nucleotide sequence ID" value="NZ_CP117965.1"/>
</dbReference>
<dbReference type="SMR" id="A5UL35"/>
<dbReference type="STRING" id="420247.Msm_0708"/>
<dbReference type="EnsemblBacteria" id="ABQ86913">
    <property type="protein sequence ID" value="ABQ86913"/>
    <property type="gene ID" value="Msm_0708"/>
</dbReference>
<dbReference type="KEGG" id="msi:Msm_0708"/>
<dbReference type="PATRIC" id="fig|420247.28.peg.705"/>
<dbReference type="eggNOG" id="arCOG04179">
    <property type="taxonomic scope" value="Archaea"/>
</dbReference>
<dbReference type="HOGENOM" id="CLU_122978_3_0_2"/>
<dbReference type="BioCyc" id="MSMI420247:GHWZ-721-MONOMER"/>
<dbReference type="Proteomes" id="UP000001992">
    <property type="component" value="Chromosome"/>
</dbReference>
<dbReference type="GO" id="GO:0005829">
    <property type="term" value="C:cytosol"/>
    <property type="evidence" value="ECO:0007669"/>
    <property type="project" value="TreeGrafter"/>
</dbReference>
<dbReference type="GO" id="GO:0003677">
    <property type="term" value="F:DNA binding"/>
    <property type="evidence" value="ECO:0007669"/>
    <property type="project" value="UniProtKB-UniRule"/>
</dbReference>
<dbReference type="Gene3D" id="1.10.8.140">
    <property type="entry name" value="PDCD5-like"/>
    <property type="match status" value="1"/>
</dbReference>
<dbReference type="HAMAP" id="MF_00026">
    <property type="entry name" value="dsDNA_bind"/>
    <property type="match status" value="1"/>
</dbReference>
<dbReference type="InterPro" id="IPR022889">
    <property type="entry name" value="DNA_bind_arc"/>
</dbReference>
<dbReference type="InterPro" id="IPR002836">
    <property type="entry name" value="PDCD5-like"/>
</dbReference>
<dbReference type="InterPro" id="IPR036883">
    <property type="entry name" value="PDCD5-like_sf"/>
</dbReference>
<dbReference type="NCBIfam" id="NF003268">
    <property type="entry name" value="PRK04239.1"/>
    <property type="match status" value="1"/>
</dbReference>
<dbReference type="PANTHER" id="PTHR10840">
    <property type="entry name" value="PROGRAMMED CELL DEATH PROTEIN 5"/>
    <property type="match status" value="1"/>
</dbReference>
<dbReference type="PANTHER" id="PTHR10840:SF0">
    <property type="entry name" value="PROGRAMMED CELL DEATH PROTEIN 5"/>
    <property type="match status" value="1"/>
</dbReference>
<dbReference type="Pfam" id="PF01984">
    <property type="entry name" value="dsDNA_bind"/>
    <property type="match status" value="1"/>
</dbReference>
<dbReference type="PIRSF" id="PIRSF015730">
    <property type="entry name" value="TFAR19"/>
    <property type="match status" value="1"/>
</dbReference>
<dbReference type="SUPFAM" id="SSF46950">
    <property type="entry name" value="Double-stranded DNA-binding domain"/>
    <property type="match status" value="1"/>
</dbReference>
<proteinExistence type="inferred from homology"/>
<accession>A5UL35</accession>
<comment type="similarity">
    <text evidence="1">Belongs to the PDCD5 family.</text>
</comment>
<organism>
    <name type="scientific">Methanobrevibacter smithii (strain ATCC 35061 / DSM 861 / OCM 144 / PS)</name>
    <dbReference type="NCBI Taxonomy" id="420247"/>
    <lineage>
        <taxon>Archaea</taxon>
        <taxon>Methanobacteriati</taxon>
        <taxon>Methanobacteriota</taxon>
        <taxon>Methanomada group</taxon>
        <taxon>Methanobacteria</taxon>
        <taxon>Methanobacteriales</taxon>
        <taxon>Methanobacteriaceae</taxon>
        <taxon>Methanobrevibacter</taxon>
    </lineage>
</organism>
<name>Y708_METS3</name>